<gene>
    <name evidence="1" type="primary">groES</name>
    <name evidence="1" type="synonym">groS</name>
    <name type="ordered locus">Bphyt_0863</name>
</gene>
<evidence type="ECO:0000255" key="1">
    <source>
        <dbReference type="HAMAP-Rule" id="MF_00580"/>
    </source>
</evidence>
<organism>
    <name type="scientific">Paraburkholderia phytofirmans (strain DSM 17436 / LMG 22146 / PsJN)</name>
    <name type="common">Burkholderia phytofirmans</name>
    <dbReference type="NCBI Taxonomy" id="398527"/>
    <lineage>
        <taxon>Bacteria</taxon>
        <taxon>Pseudomonadati</taxon>
        <taxon>Pseudomonadota</taxon>
        <taxon>Betaproteobacteria</taxon>
        <taxon>Burkholderiales</taxon>
        <taxon>Burkholderiaceae</taxon>
        <taxon>Paraburkholderia</taxon>
    </lineage>
</organism>
<comment type="function">
    <text evidence="1">Together with the chaperonin GroEL, plays an essential role in assisting protein folding. The GroEL-GroES system forms a nano-cage that allows encapsulation of the non-native substrate proteins and provides a physical environment optimized to promote and accelerate protein folding. GroES binds to the apical surface of the GroEL ring, thereby capping the opening of the GroEL channel.</text>
</comment>
<comment type="subunit">
    <text evidence="1">Heptamer of 7 subunits arranged in a ring. Interacts with the chaperonin GroEL.</text>
</comment>
<comment type="subcellular location">
    <subcellularLocation>
        <location evidence="1">Cytoplasm</location>
    </subcellularLocation>
</comment>
<comment type="similarity">
    <text evidence="1">Belongs to the GroES chaperonin family.</text>
</comment>
<dbReference type="EMBL" id="CP001052">
    <property type="protein sequence ID" value="ACD15284.1"/>
    <property type="molecule type" value="Genomic_DNA"/>
</dbReference>
<dbReference type="RefSeq" id="WP_007178996.1">
    <property type="nucleotide sequence ID" value="NC_010681.1"/>
</dbReference>
<dbReference type="SMR" id="B2T0H9"/>
<dbReference type="STRING" id="398527.Bphyt_0863"/>
<dbReference type="GeneID" id="97305578"/>
<dbReference type="KEGG" id="bpy:Bphyt_0863"/>
<dbReference type="eggNOG" id="COG0234">
    <property type="taxonomic scope" value="Bacteria"/>
</dbReference>
<dbReference type="HOGENOM" id="CLU_132825_1_0_4"/>
<dbReference type="OrthoDB" id="9806791at2"/>
<dbReference type="Proteomes" id="UP000001739">
    <property type="component" value="Chromosome 1"/>
</dbReference>
<dbReference type="GO" id="GO:0005737">
    <property type="term" value="C:cytoplasm"/>
    <property type="evidence" value="ECO:0007669"/>
    <property type="project" value="UniProtKB-SubCell"/>
</dbReference>
<dbReference type="GO" id="GO:0005524">
    <property type="term" value="F:ATP binding"/>
    <property type="evidence" value="ECO:0007669"/>
    <property type="project" value="InterPro"/>
</dbReference>
<dbReference type="GO" id="GO:0046872">
    <property type="term" value="F:metal ion binding"/>
    <property type="evidence" value="ECO:0007669"/>
    <property type="project" value="TreeGrafter"/>
</dbReference>
<dbReference type="GO" id="GO:0044183">
    <property type="term" value="F:protein folding chaperone"/>
    <property type="evidence" value="ECO:0007669"/>
    <property type="project" value="InterPro"/>
</dbReference>
<dbReference type="GO" id="GO:0051087">
    <property type="term" value="F:protein-folding chaperone binding"/>
    <property type="evidence" value="ECO:0007669"/>
    <property type="project" value="TreeGrafter"/>
</dbReference>
<dbReference type="GO" id="GO:0051082">
    <property type="term" value="F:unfolded protein binding"/>
    <property type="evidence" value="ECO:0007669"/>
    <property type="project" value="TreeGrafter"/>
</dbReference>
<dbReference type="GO" id="GO:0051085">
    <property type="term" value="P:chaperone cofactor-dependent protein refolding"/>
    <property type="evidence" value="ECO:0007669"/>
    <property type="project" value="TreeGrafter"/>
</dbReference>
<dbReference type="CDD" id="cd00320">
    <property type="entry name" value="cpn10"/>
    <property type="match status" value="1"/>
</dbReference>
<dbReference type="FunFam" id="2.30.33.40:FF:000001">
    <property type="entry name" value="10 kDa chaperonin"/>
    <property type="match status" value="1"/>
</dbReference>
<dbReference type="Gene3D" id="2.30.33.40">
    <property type="entry name" value="GroES chaperonin"/>
    <property type="match status" value="1"/>
</dbReference>
<dbReference type="HAMAP" id="MF_00580">
    <property type="entry name" value="CH10"/>
    <property type="match status" value="1"/>
</dbReference>
<dbReference type="InterPro" id="IPR020818">
    <property type="entry name" value="Chaperonin_GroES"/>
</dbReference>
<dbReference type="InterPro" id="IPR037124">
    <property type="entry name" value="Chaperonin_GroES_sf"/>
</dbReference>
<dbReference type="InterPro" id="IPR018369">
    <property type="entry name" value="Chaprnonin_Cpn10_CS"/>
</dbReference>
<dbReference type="InterPro" id="IPR011032">
    <property type="entry name" value="GroES-like_sf"/>
</dbReference>
<dbReference type="NCBIfam" id="NF001527">
    <property type="entry name" value="PRK00364.1-2"/>
    <property type="match status" value="1"/>
</dbReference>
<dbReference type="NCBIfam" id="NF001529">
    <property type="entry name" value="PRK00364.1-5"/>
    <property type="match status" value="1"/>
</dbReference>
<dbReference type="NCBIfam" id="NF001531">
    <property type="entry name" value="PRK00364.2-2"/>
    <property type="match status" value="1"/>
</dbReference>
<dbReference type="NCBIfam" id="NF001533">
    <property type="entry name" value="PRK00364.2-4"/>
    <property type="match status" value="1"/>
</dbReference>
<dbReference type="NCBIfam" id="NF001534">
    <property type="entry name" value="PRK00364.2-5"/>
    <property type="match status" value="1"/>
</dbReference>
<dbReference type="PANTHER" id="PTHR10772">
    <property type="entry name" value="10 KDA HEAT SHOCK PROTEIN"/>
    <property type="match status" value="1"/>
</dbReference>
<dbReference type="PANTHER" id="PTHR10772:SF58">
    <property type="entry name" value="CO-CHAPERONIN GROES"/>
    <property type="match status" value="1"/>
</dbReference>
<dbReference type="Pfam" id="PF00166">
    <property type="entry name" value="Cpn10"/>
    <property type="match status" value="1"/>
</dbReference>
<dbReference type="PRINTS" id="PR00297">
    <property type="entry name" value="CHAPERONIN10"/>
</dbReference>
<dbReference type="SMART" id="SM00883">
    <property type="entry name" value="Cpn10"/>
    <property type="match status" value="1"/>
</dbReference>
<dbReference type="SUPFAM" id="SSF50129">
    <property type="entry name" value="GroES-like"/>
    <property type="match status" value="1"/>
</dbReference>
<dbReference type="PROSITE" id="PS00681">
    <property type="entry name" value="CHAPERONINS_CPN10"/>
    <property type="match status" value="1"/>
</dbReference>
<sequence length="96" mass="10464">MNLRPLHDRVIVKRLDQETKTASGIVIPEAAAEKPDQGEILAVGPGKRDDKGAQIALDVKVGDRVLFGKYAGQTVKVDGNELLVMREEDIMAVVQK</sequence>
<accession>B2T0H9</accession>
<protein>
    <recommendedName>
        <fullName evidence="1">Co-chaperonin GroES</fullName>
    </recommendedName>
    <alternativeName>
        <fullName evidence="1">10 kDa chaperonin</fullName>
    </alternativeName>
    <alternativeName>
        <fullName evidence="1">Chaperonin-10</fullName>
        <shortName evidence="1">Cpn10</shortName>
    </alternativeName>
</protein>
<feature type="chain" id="PRO_1000129633" description="Co-chaperonin GroES">
    <location>
        <begin position="1"/>
        <end position="96"/>
    </location>
</feature>
<name>CH10_PARPJ</name>
<keyword id="KW-0143">Chaperone</keyword>
<keyword id="KW-0963">Cytoplasm</keyword>
<reference key="1">
    <citation type="journal article" date="2011" name="J. Bacteriol.">
        <title>Complete genome sequence of the plant growth-promoting endophyte Burkholderia phytofirmans strain PsJN.</title>
        <authorList>
            <person name="Weilharter A."/>
            <person name="Mitter B."/>
            <person name="Shin M.V."/>
            <person name="Chain P.S."/>
            <person name="Nowak J."/>
            <person name="Sessitsch A."/>
        </authorList>
    </citation>
    <scope>NUCLEOTIDE SEQUENCE [LARGE SCALE GENOMIC DNA]</scope>
    <source>
        <strain>DSM 17436 / LMG 22146 / PsJN</strain>
    </source>
</reference>
<proteinExistence type="inferred from homology"/>